<protein>
    <recommendedName>
        <fullName>Corrinoid adenosyltransferase</fullName>
        <ecNumber>2.5.1.17</ecNumber>
    </recommendedName>
    <alternativeName>
        <fullName>Cob(II)alamin adenosyltransferase</fullName>
    </alternativeName>
    <alternativeName>
        <fullName>Cob(II)yrinic acid a,c-diamide adenosyltransferase</fullName>
    </alternativeName>
    <alternativeName>
        <fullName>Cobinamide/cobalamin adenosyltransferase</fullName>
    </alternativeName>
</protein>
<comment type="catalytic activity">
    <reaction>
        <text>2 cob(II)yrinate a,c diamide + reduced [electron-transfer flavoprotein] + 2 ATP = 2 adenosylcob(III)yrinate a,c-diamide + 2 triphosphate + oxidized [electron-transfer flavoprotein] + 3 H(+)</text>
        <dbReference type="Rhea" id="RHEA:11528"/>
        <dbReference type="Rhea" id="RHEA-COMP:10685"/>
        <dbReference type="Rhea" id="RHEA-COMP:10686"/>
        <dbReference type="ChEBI" id="CHEBI:15378"/>
        <dbReference type="ChEBI" id="CHEBI:18036"/>
        <dbReference type="ChEBI" id="CHEBI:30616"/>
        <dbReference type="ChEBI" id="CHEBI:57692"/>
        <dbReference type="ChEBI" id="CHEBI:58307"/>
        <dbReference type="ChEBI" id="CHEBI:58503"/>
        <dbReference type="ChEBI" id="CHEBI:58537"/>
        <dbReference type="EC" id="2.5.1.17"/>
    </reaction>
</comment>
<comment type="catalytic activity">
    <reaction>
        <text>2 cob(II)alamin + reduced [electron-transfer flavoprotein] + 2 ATP = 2 adenosylcob(III)alamin + 2 triphosphate + oxidized [electron-transfer flavoprotein] + 3 H(+)</text>
        <dbReference type="Rhea" id="RHEA:28671"/>
        <dbReference type="Rhea" id="RHEA-COMP:10685"/>
        <dbReference type="Rhea" id="RHEA-COMP:10686"/>
        <dbReference type="ChEBI" id="CHEBI:15378"/>
        <dbReference type="ChEBI" id="CHEBI:16304"/>
        <dbReference type="ChEBI" id="CHEBI:18036"/>
        <dbReference type="ChEBI" id="CHEBI:18408"/>
        <dbReference type="ChEBI" id="CHEBI:30616"/>
        <dbReference type="ChEBI" id="CHEBI:57692"/>
        <dbReference type="ChEBI" id="CHEBI:58307"/>
        <dbReference type="EC" id="2.5.1.17"/>
    </reaction>
</comment>
<comment type="pathway">
    <text>Cofactor biosynthesis; adenosylcobalamin biosynthesis; adenosylcobalamin from cob(II)yrinate a,c-diamide: step 2/7.</text>
</comment>
<comment type="subcellular location">
    <subcellularLocation>
        <location evidence="2">Cytoplasm</location>
    </subcellularLocation>
</comment>
<comment type="similarity">
    <text evidence="2">Belongs to the Cob(I)alamin adenosyltransferase family.</text>
</comment>
<reference key="1">
    <citation type="submission" date="1994-09" db="EMBL/GenBank/DDBJ databases">
        <authorList>
            <person name="Smith D.R."/>
            <person name="Robison K."/>
        </authorList>
    </citation>
    <scope>NUCLEOTIDE SEQUENCE [GENOMIC DNA]</scope>
</reference>
<reference key="2">
    <citation type="journal article" date="2001" name="Nature">
        <title>Massive gene decay in the leprosy bacillus.</title>
        <authorList>
            <person name="Cole S.T."/>
            <person name="Eiglmeier K."/>
            <person name="Parkhill J."/>
            <person name="James K.D."/>
            <person name="Thomson N.R."/>
            <person name="Wheeler P.R."/>
            <person name="Honore N."/>
            <person name="Garnier T."/>
            <person name="Churcher C.M."/>
            <person name="Harris D.E."/>
            <person name="Mungall K.L."/>
            <person name="Basham D."/>
            <person name="Brown D."/>
            <person name="Chillingworth T."/>
            <person name="Connor R."/>
            <person name="Davies R.M."/>
            <person name="Devlin K."/>
            <person name="Duthoy S."/>
            <person name="Feltwell T."/>
            <person name="Fraser A."/>
            <person name="Hamlin N."/>
            <person name="Holroyd S."/>
            <person name="Hornsby T."/>
            <person name="Jagels K."/>
            <person name="Lacroix C."/>
            <person name="Maclean J."/>
            <person name="Moule S."/>
            <person name="Murphy L.D."/>
            <person name="Oliver K."/>
            <person name="Quail M.A."/>
            <person name="Rajandream M.A."/>
            <person name="Rutherford K.M."/>
            <person name="Rutter S."/>
            <person name="Seeger K."/>
            <person name="Simon S."/>
            <person name="Simmonds M."/>
            <person name="Skelton J."/>
            <person name="Squares R."/>
            <person name="Squares S."/>
            <person name="Stevens K."/>
            <person name="Taylor K."/>
            <person name="Whitehead S."/>
            <person name="Woodward J.R."/>
            <person name="Barrell B.G."/>
        </authorList>
    </citation>
    <scope>NUCLEOTIDE SEQUENCE [LARGE SCALE GENOMIC DNA]</scope>
    <source>
        <strain>TN</strain>
    </source>
</reference>
<organism>
    <name type="scientific">Mycobacterium leprae (strain TN)</name>
    <dbReference type="NCBI Taxonomy" id="272631"/>
    <lineage>
        <taxon>Bacteria</taxon>
        <taxon>Bacillati</taxon>
        <taxon>Actinomycetota</taxon>
        <taxon>Actinomycetes</taxon>
        <taxon>Mycobacteriales</taxon>
        <taxon>Mycobacteriaceae</taxon>
        <taxon>Mycobacterium</taxon>
    </lineage>
</organism>
<sequence length="191" mass="20916">MAIHLTRIYTRTGDNGTTGLSDFSRVAKTDLRLVAYADCDETNSAIGVALALGNPDQKITDVLQQIQNDLFDAGADLSTPMQDSVRNPEYPQLRITQTHIDRLEEWCDTYNTPLPTLNSFVLPGGSPLSALLHVARTVARRAERSAWAAVEAHPGVVSMLPAKYLNRLSDLLFILSRVANTGNDVLWRPGG</sequence>
<accession>P53523</accession>
<name>PDUO_MYCLE</name>
<proteinExistence type="inferred from homology"/>
<keyword id="KW-0067">ATP-binding</keyword>
<keyword id="KW-0169">Cobalamin biosynthesis</keyword>
<keyword id="KW-0963">Cytoplasm</keyword>
<keyword id="KW-0547">Nucleotide-binding</keyword>
<keyword id="KW-0627">Porphyrin biosynthesis</keyword>
<keyword id="KW-1185">Reference proteome</keyword>
<keyword id="KW-0808">Transferase</keyword>
<dbReference type="EC" id="2.5.1.17"/>
<dbReference type="EMBL" id="U15186">
    <property type="protein sequence ID" value="AAA63097.1"/>
    <property type="molecule type" value="Genomic_DNA"/>
</dbReference>
<dbReference type="EMBL" id="AL583920">
    <property type="protein sequence ID" value="CAC31530.1"/>
    <property type="molecule type" value="Genomic_DNA"/>
</dbReference>
<dbReference type="PIR" id="T09970">
    <property type="entry name" value="T09970"/>
</dbReference>
<dbReference type="RefSeq" id="NP_301843.1">
    <property type="nucleotide sequence ID" value="NC_002677.1"/>
</dbReference>
<dbReference type="RefSeq" id="WP_010908167.1">
    <property type="nucleotide sequence ID" value="NC_002677.1"/>
</dbReference>
<dbReference type="SMR" id="P53523"/>
<dbReference type="STRING" id="272631.gene:17574976"/>
<dbReference type="KEGG" id="mle:ML1149"/>
<dbReference type="PATRIC" id="fig|272631.5.peg.2072"/>
<dbReference type="Leproma" id="ML1149"/>
<dbReference type="eggNOG" id="COG2096">
    <property type="taxonomic scope" value="Bacteria"/>
</dbReference>
<dbReference type="HOGENOM" id="CLU_083486_0_0_11"/>
<dbReference type="OrthoDB" id="9778896at2"/>
<dbReference type="UniPathway" id="UPA00148">
    <property type="reaction ID" value="UER00233"/>
</dbReference>
<dbReference type="Proteomes" id="UP000000806">
    <property type="component" value="Chromosome"/>
</dbReference>
<dbReference type="GO" id="GO:0005737">
    <property type="term" value="C:cytoplasm"/>
    <property type="evidence" value="ECO:0007669"/>
    <property type="project" value="UniProtKB-SubCell"/>
</dbReference>
<dbReference type="GO" id="GO:0005524">
    <property type="term" value="F:ATP binding"/>
    <property type="evidence" value="ECO:0007669"/>
    <property type="project" value="UniProtKB-KW"/>
</dbReference>
<dbReference type="GO" id="GO:0008817">
    <property type="term" value="F:corrinoid adenosyltransferase activity"/>
    <property type="evidence" value="ECO:0007669"/>
    <property type="project" value="UniProtKB-EC"/>
</dbReference>
<dbReference type="GO" id="GO:0009236">
    <property type="term" value="P:cobalamin biosynthetic process"/>
    <property type="evidence" value="ECO:0007669"/>
    <property type="project" value="UniProtKB-UniPathway"/>
</dbReference>
<dbReference type="GO" id="GO:0006779">
    <property type="term" value="P:porphyrin-containing compound biosynthetic process"/>
    <property type="evidence" value="ECO:0007669"/>
    <property type="project" value="UniProtKB-KW"/>
</dbReference>
<dbReference type="FunFam" id="1.20.1200.10:FF:000003">
    <property type="entry name" value="ATP:cob(I)alamin adenosyltransferase"/>
    <property type="match status" value="1"/>
</dbReference>
<dbReference type="Gene3D" id="1.20.1200.10">
    <property type="entry name" value="Cobalamin adenosyltransferase-like"/>
    <property type="match status" value="1"/>
</dbReference>
<dbReference type="InterPro" id="IPR016030">
    <property type="entry name" value="CblAdoTrfase-like"/>
</dbReference>
<dbReference type="InterPro" id="IPR036451">
    <property type="entry name" value="CblAdoTrfase-like_sf"/>
</dbReference>
<dbReference type="InterPro" id="IPR029499">
    <property type="entry name" value="PduO-typ"/>
</dbReference>
<dbReference type="NCBIfam" id="TIGR00636">
    <property type="entry name" value="PduO_Nterm"/>
    <property type="match status" value="1"/>
</dbReference>
<dbReference type="PANTHER" id="PTHR12213">
    <property type="entry name" value="CORRINOID ADENOSYLTRANSFERASE"/>
    <property type="match status" value="1"/>
</dbReference>
<dbReference type="PANTHER" id="PTHR12213:SF0">
    <property type="entry name" value="CORRINOID ADENOSYLTRANSFERASE MMAB"/>
    <property type="match status" value="1"/>
</dbReference>
<dbReference type="Pfam" id="PF01923">
    <property type="entry name" value="Cob_adeno_trans"/>
    <property type="match status" value="1"/>
</dbReference>
<dbReference type="SUPFAM" id="SSF89028">
    <property type="entry name" value="Cobalamin adenosyltransferase-like"/>
    <property type="match status" value="1"/>
</dbReference>
<gene>
    <name type="ordered locus">ML1149</name>
    <name type="ORF">u471a</name>
</gene>
<evidence type="ECO:0000250" key="1"/>
<evidence type="ECO:0000305" key="2"/>
<feature type="chain" id="PRO_0000103800" description="Corrinoid adenosyltransferase">
    <location>
        <begin position="1"/>
        <end position="191"/>
    </location>
</feature>
<feature type="binding site" evidence="1">
    <location>
        <begin position="10"/>
        <end position="18"/>
    </location>
    <ligand>
        <name>ATP</name>
        <dbReference type="ChEBI" id="CHEBI:30616"/>
    </ligand>
</feature>
<feature type="binding site" evidence="1">
    <location>
        <position position="28"/>
    </location>
    <ligand>
        <name>ATP</name>
        <dbReference type="ChEBI" id="CHEBI:30616"/>
    </ligand>
</feature>
<feature type="binding site" evidence="1">
    <location>
        <begin position="140"/>
        <end position="145"/>
    </location>
    <ligand>
        <name>ATP</name>
        <dbReference type="ChEBI" id="CHEBI:30616"/>
    </ligand>
</feature>
<feature type="binding site" evidence="1">
    <location>
        <position position="166"/>
    </location>
    <ligand>
        <name>ATP</name>
        <dbReference type="ChEBI" id="CHEBI:30616"/>
    </ligand>
</feature>